<gene>
    <name type="primary">dnaE</name>
    <name type="ordered locus">PD_0165</name>
</gene>
<reference key="1">
    <citation type="journal article" date="2003" name="J. Bacteriol.">
        <title>Comparative analyses of the complete genome sequences of Pierce's disease and citrus variegated chlorosis strains of Xylella fastidiosa.</title>
        <authorList>
            <person name="Van Sluys M.A."/>
            <person name="de Oliveira M.C."/>
            <person name="Monteiro-Vitorello C.B."/>
            <person name="Miyaki C.Y."/>
            <person name="Furlan L.R."/>
            <person name="Camargo L.E.A."/>
            <person name="da Silva A.C.R."/>
            <person name="Moon D.H."/>
            <person name="Takita M.A."/>
            <person name="Lemos E.G.M."/>
            <person name="Machado M.A."/>
            <person name="Ferro M.I.T."/>
            <person name="da Silva F.R."/>
            <person name="Goldman M.H.S."/>
            <person name="Goldman G.H."/>
            <person name="Lemos M.V.F."/>
            <person name="El-Dorry H."/>
            <person name="Tsai S.M."/>
            <person name="Carrer H."/>
            <person name="Carraro D.M."/>
            <person name="de Oliveira R.C."/>
            <person name="Nunes L.R."/>
            <person name="Siqueira W.J."/>
            <person name="Coutinho L.L."/>
            <person name="Kimura E.T."/>
            <person name="Ferro E.S."/>
            <person name="Harakava R."/>
            <person name="Kuramae E.E."/>
            <person name="Marino C.L."/>
            <person name="Giglioti E."/>
            <person name="Abreu I.L."/>
            <person name="Alves L.M.C."/>
            <person name="do Amaral A.M."/>
            <person name="Baia G.S."/>
            <person name="Blanco S.R."/>
            <person name="Brito M.S."/>
            <person name="Cannavan F.S."/>
            <person name="Celestino A.V."/>
            <person name="da Cunha A.F."/>
            <person name="Fenille R.C."/>
            <person name="Ferro J.A."/>
            <person name="Formighieri E.F."/>
            <person name="Kishi L.T."/>
            <person name="Leoni S.G."/>
            <person name="Oliveira A.R."/>
            <person name="Rosa V.E. Jr."/>
            <person name="Sassaki F.T."/>
            <person name="Sena J.A.D."/>
            <person name="de Souza A.A."/>
            <person name="Truffi D."/>
            <person name="Tsukumo F."/>
            <person name="Yanai G.M."/>
            <person name="Zaros L.G."/>
            <person name="Civerolo E.L."/>
            <person name="Simpson A.J.G."/>
            <person name="Almeida N.F. Jr."/>
            <person name="Setubal J.C."/>
            <person name="Kitajima J.P."/>
        </authorList>
    </citation>
    <scope>NUCLEOTIDE SEQUENCE [LARGE SCALE GENOMIC DNA]</scope>
    <source>
        <strain>Temecula1 / ATCC 700964</strain>
    </source>
</reference>
<name>DPO3A_XYLFT</name>
<accession>Q87EY0</accession>
<feature type="chain" id="PRO_0000103360" description="DNA polymerase III subunit alpha">
    <location>
        <begin position="1"/>
        <end position="1193"/>
    </location>
</feature>
<comment type="function">
    <text evidence="1">DNA polymerase III is a complex, multichain enzyme responsible for most of the replicative synthesis in bacteria. This DNA polymerase also exhibits 3' to 5' exonuclease activity. The alpha chain is the DNA polymerase (By similarity).</text>
</comment>
<comment type="catalytic activity">
    <reaction>
        <text>DNA(n) + a 2'-deoxyribonucleoside 5'-triphosphate = DNA(n+1) + diphosphate</text>
        <dbReference type="Rhea" id="RHEA:22508"/>
        <dbReference type="Rhea" id="RHEA-COMP:17339"/>
        <dbReference type="Rhea" id="RHEA-COMP:17340"/>
        <dbReference type="ChEBI" id="CHEBI:33019"/>
        <dbReference type="ChEBI" id="CHEBI:61560"/>
        <dbReference type="ChEBI" id="CHEBI:173112"/>
        <dbReference type="EC" id="2.7.7.7"/>
    </reaction>
</comment>
<comment type="subunit">
    <text evidence="1">DNA polymerase III contains a core (composed of alpha, epsilon and theta chains) that associates with a tau subunit. This core dimerizes to form the PolIII' complex. PolIII' associates with the gamma complex (composed of gamma, delta, delta', psi and chi chains) and with the beta chain to form the complete DNA polymerase III complex (By similarity).</text>
</comment>
<comment type="subcellular location">
    <subcellularLocation>
        <location evidence="1">Cytoplasm</location>
    </subcellularLocation>
</comment>
<comment type="similarity">
    <text evidence="2">Belongs to the DNA polymerase type-C family. DnaE subfamily.</text>
</comment>
<dbReference type="EC" id="2.7.7.7"/>
<dbReference type="EMBL" id="AE009442">
    <property type="protein sequence ID" value="AAO28059.1"/>
    <property type="molecule type" value="Genomic_DNA"/>
</dbReference>
<dbReference type="RefSeq" id="WP_004572983.1">
    <property type="nucleotide sequence ID" value="NC_004556.1"/>
</dbReference>
<dbReference type="SMR" id="Q87EY0"/>
<dbReference type="GeneID" id="93903856"/>
<dbReference type="KEGG" id="xft:PD_0165"/>
<dbReference type="HOGENOM" id="CLU_001600_0_0_6"/>
<dbReference type="Proteomes" id="UP000002516">
    <property type="component" value="Chromosome"/>
</dbReference>
<dbReference type="GO" id="GO:0005737">
    <property type="term" value="C:cytoplasm"/>
    <property type="evidence" value="ECO:0007669"/>
    <property type="project" value="UniProtKB-SubCell"/>
</dbReference>
<dbReference type="GO" id="GO:0008408">
    <property type="term" value="F:3'-5' exonuclease activity"/>
    <property type="evidence" value="ECO:0007669"/>
    <property type="project" value="InterPro"/>
</dbReference>
<dbReference type="GO" id="GO:0003887">
    <property type="term" value="F:DNA-directed DNA polymerase activity"/>
    <property type="evidence" value="ECO:0007669"/>
    <property type="project" value="UniProtKB-KW"/>
</dbReference>
<dbReference type="GO" id="GO:0003676">
    <property type="term" value="F:nucleic acid binding"/>
    <property type="evidence" value="ECO:0007669"/>
    <property type="project" value="InterPro"/>
</dbReference>
<dbReference type="GO" id="GO:0006260">
    <property type="term" value="P:DNA replication"/>
    <property type="evidence" value="ECO:0007669"/>
    <property type="project" value="UniProtKB-KW"/>
</dbReference>
<dbReference type="CDD" id="cd04485">
    <property type="entry name" value="DnaE_OBF"/>
    <property type="match status" value="1"/>
</dbReference>
<dbReference type="CDD" id="cd07433">
    <property type="entry name" value="PHP_PolIIIA_DnaE1"/>
    <property type="match status" value="1"/>
</dbReference>
<dbReference type="Gene3D" id="1.10.150.870">
    <property type="match status" value="1"/>
</dbReference>
<dbReference type="Gene3D" id="1.10.10.1600">
    <property type="entry name" value="Bacterial DNA polymerase III alpha subunit, thumb domain"/>
    <property type="match status" value="1"/>
</dbReference>
<dbReference type="Gene3D" id="3.20.20.140">
    <property type="entry name" value="Metal-dependent hydrolases"/>
    <property type="match status" value="1"/>
</dbReference>
<dbReference type="Gene3D" id="2.40.50.140">
    <property type="entry name" value="Nucleic acid-binding proteins"/>
    <property type="match status" value="1"/>
</dbReference>
<dbReference type="InterPro" id="IPR011708">
    <property type="entry name" value="DNA_pol3_alpha_NTPase_dom"/>
</dbReference>
<dbReference type="InterPro" id="IPR041931">
    <property type="entry name" value="DNA_pol3_alpha_thumb_dom"/>
</dbReference>
<dbReference type="InterPro" id="IPR040982">
    <property type="entry name" value="DNA_pol3_finger"/>
</dbReference>
<dbReference type="InterPro" id="IPR004805">
    <property type="entry name" value="DnaE2/DnaE/PolC"/>
</dbReference>
<dbReference type="InterPro" id="IPR029460">
    <property type="entry name" value="DNAPol_HHH"/>
</dbReference>
<dbReference type="InterPro" id="IPR012340">
    <property type="entry name" value="NA-bd_OB-fold"/>
</dbReference>
<dbReference type="InterPro" id="IPR004365">
    <property type="entry name" value="NA-bd_OB_tRNA"/>
</dbReference>
<dbReference type="InterPro" id="IPR004013">
    <property type="entry name" value="PHP_dom"/>
</dbReference>
<dbReference type="InterPro" id="IPR003141">
    <property type="entry name" value="Pol/His_phosphatase_N"/>
</dbReference>
<dbReference type="InterPro" id="IPR016195">
    <property type="entry name" value="Pol/histidinol_Pase-like"/>
</dbReference>
<dbReference type="InterPro" id="IPR049821">
    <property type="entry name" value="PolIIIA_DnaE1_PHP"/>
</dbReference>
<dbReference type="NCBIfam" id="TIGR00594">
    <property type="entry name" value="polc"/>
    <property type="match status" value="1"/>
</dbReference>
<dbReference type="NCBIfam" id="NF004226">
    <property type="entry name" value="PRK05673.1"/>
    <property type="match status" value="1"/>
</dbReference>
<dbReference type="PANTHER" id="PTHR32294">
    <property type="entry name" value="DNA POLYMERASE III SUBUNIT ALPHA"/>
    <property type="match status" value="1"/>
</dbReference>
<dbReference type="PANTHER" id="PTHR32294:SF0">
    <property type="entry name" value="DNA POLYMERASE III SUBUNIT ALPHA"/>
    <property type="match status" value="1"/>
</dbReference>
<dbReference type="Pfam" id="PF07733">
    <property type="entry name" value="DNA_pol3_alpha"/>
    <property type="match status" value="1"/>
</dbReference>
<dbReference type="Pfam" id="PF17657">
    <property type="entry name" value="DNA_pol3_finger"/>
    <property type="match status" value="1"/>
</dbReference>
<dbReference type="Pfam" id="PF14579">
    <property type="entry name" value="HHH_6"/>
    <property type="match status" value="1"/>
</dbReference>
<dbReference type="Pfam" id="PF02811">
    <property type="entry name" value="PHP"/>
    <property type="match status" value="1"/>
</dbReference>
<dbReference type="Pfam" id="PF01336">
    <property type="entry name" value="tRNA_anti-codon"/>
    <property type="match status" value="1"/>
</dbReference>
<dbReference type="SMART" id="SM00481">
    <property type="entry name" value="POLIIIAc"/>
    <property type="match status" value="1"/>
</dbReference>
<dbReference type="SUPFAM" id="SSF50249">
    <property type="entry name" value="Nucleic acid-binding proteins"/>
    <property type="match status" value="1"/>
</dbReference>
<dbReference type="SUPFAM" id="SSF89550">
    <property type="entry name" value="PHP domain-like"/>
    <property type="match status" value="1"/>
</dbReference>
<evidence type="ECO:0000250" key="1"/>
<evidence type="ECO:0000305" key="2"/>
<organism>
    <name type="scientific">Xylella fastidiosa (strain Temecula1 / ATCC 700964)</name>
    <dbReference type="NCBI Taxonomy" id="183190"/>
    <lineage>
        <taxon>Bacteria</taxon>
        <taxon>Pseudomonadati</taxon>
        <taxon>Pseudomonadota</taxon>
        <taxon>Gammaproteobacteria</taxon>
        <taxon>Lysobacterales</taxon>
        <taxon>Lysobacteraceae</taxon>
        <taxon>Xylella</taxon>
    </lineage>
</organism>
<protein>
    <recommendedName>
        <fullName>DNA polymerase III subunit alpha</fullName>
        <ecNumber>2.7.7.7</ecNumber>
    </recommendedName>
</protein>
<sequence length="1193" mass="133311">MSTSSFVHLHIHTEFSLADSTIRVPEKPEQAHPKKAKQANLLSRAVELGLPALAVTDLNNLFALIKFYKAAETVGIKPISGADLLIAEPEHPPWGMTLLCRDHAGYLNLSQLISRGWLEGHRPEGGVAVHPDWVRDHHKNLFALIGRHSLAGQLLAKGRADLAEQQLADWQHVFGDGLHLELTRTGRDGEEPFNQFALQVAGIRGIPVIASNDVRFLVQSDFLAHEARVCIASGRMLDDPKRPRTYSEQQYLRSSEEMAALFADIPDALDNTRTLAQRCNIEMRLGTYFLPNYPVPNDETLDSWIRKQSHEGLEARLLKHPLAPGQTREDYVTRLEFELDTIIKMGFSGYFLIVADFIQWGKQQGIPIGPGRGSGAGSLVAWALLITDLDPLPYNLLFERFLNPERVSMPDFDIDFCMERRDEVISYVARKYGRERVSQIITYGTMAAKAVVRDVGRVLGFPYGLVDSVAKLIPSTLGITLKDAMGEGETNDNASAELIQRYQAEEDVQELLNLARQLEDLTRNAGKHAGGVVIAPNPLTEFCPLFAEHDENGRGKNPVTQFDKNDVEEVGLVKFDFLGLRTLTIIDWAVKAINKRHARACIDPVDITALPLDDIPTYKDVFASGNTSAVFQFESSGMRRLLKDARPDRFEDLIALVSLYRPGPMDLIPEFTARKHGVQETIYPDPRTKNILKDTYGIMVYQEQVMQMAQIVGGYSLGSADLLRRAMGKKVPAEMAKHREIFREGAAKGGMDAVKADEIFDLMEKFAGYGFNKSHAAAYALVSYQTAWLKRHYPAEFMAATLSSDMDNTDKVVGFLDEARNLNLKVLRPNINHSAYMFEATHADTIQYGLGAIKGVGQSVCEAIVKERLHYGPYTSLLDFCTRVTSAKLNRRALEAMIHAGALDELGKNRASVMLQLPEVIKATEQMSRERESGQNSLFGNADPGTPVIQLDLPECEEWPLTRMLNGERETLGLYFSGHPFDPYRKQVKELVGCDLNTSALERILGSQQRGNGEKRTWQPEVNTILAGLVVSVRRKGDSQVFVQLEDGRGRIECSAFSDALAEFGHLLTRDRILIVKGGLREDEFNGGYSLRIRQCWDYAQLCTDYAQRLLLRVDLRTSHAWERIDAILARYRPGNTPLRLDLLLNSTHGPVAGTLDLSGGQSVRIEQSLLDKLQKDPAVSKLKVKYTPPWVQ</sequence>
<proteinExistence type="inferred from homology"/>
<keyword id="KW-0963">Cytoplasm</keyword>
<keyword id="KW-0235">DNA replication</keyword>
<keyword id="KW-0239">DNA-directed DNA polymerase</keyword>
<keyword id="KW-0548">Nucleotidyltransferase</keyword>
<keyword id="KW-1185">Reference proteome</keyword>
<keyword id="KW-0808">Transferase</keyword>